<reference key="1">
    <citation type="journal article" date="2002" name="FEMS Microbiol. Lett.">
        <title>Mycoplasma gallisepticum rpoA gene cluster.</title>
        <authorList>
            <person name="Skamrov A.V."/>
            <person name="Feoktistova E.S."/>
            <person name="Gol'dman M.A."/>
            <person name="Bibilashvili R.S."/>
        </authorList>
    </citation>
    <scope>NUCLEOTIDE SEQUENCE [GENOMIC DNA]</scope>
    <source>
        <strain>A5969Var.B</strain>
    </source>
</reference>
<reference key="2">
    <citation type="journal article" date="2003" name="Microbiology">
        <title>The complete genome sequence of the avian pathogen Mycoplasma gallisepticum strain R(low).</title>
        <authorList>
            <person name="Papazisi L."/>
            <person name="Gorton T.S."/>
            <person name="Kutish G."/>
            <person name="Markham P.F."/>
            <person name="Browning G.F."/>
            <person name="Nguyen D.K."/>
            <person name="Swartzell S."/>
            <person name="Madan A."/>
            <person name="Mahairas G."/>
            <person name="Geary S.J."/>
        </authorList>
    </citation>
    <scope>NUCLEOTIDE SEQUENCE [LARGE SCALE GENOMIC DNA]</scope>
    <source>
        <strain>R(low / passage 15 / clone 2)</strain>
    </source>
</reference>
<feature type="chain" id="PRO_0000095819" description="Translation initiation factor IF-1">
    <location>
        <begin position="1"/>
        <end position="70"/>
    </location>
</feature>
<feature type="domain" description="S1-like" evidence="1">
    <location>
        <begin position="1"/>
        <end position="70"/>
    </location>
</feature>
<protein>
    <recommendedName>
        <fullName evidence="1">Translation initiation factor IF-1</fullName>
    </recommendedName>
</protein>
<accession>Q9R6P8</accession>
<gene>
    <name evidence="1" type="primary">infA</name>
    <name type="ordered locus">MYCGA6320</name>
    <name type="ORF">MGA_0449</name>
</gene>
<name>IF1_MYCGA</name>
<organism>
    <name type="scientific">Mycoplasmoides gallisepticum (strain R(low / passage 15 / clone 2))</name>
    <name type="common">Mycoplasma gallisepticum</name>
    <dbReference type="NCBI Taxonomy" id="710127"/>
    <lineage>
        <taxon>Bacteria</taxon>
        <taxon>Bacillati</taxon>
        <taxon>Mycoplasmatota</taxon>
        <taxon>Mycoplasmoidales</taxon>
        <taxon>Mycoplasmoidaceae</taxon>
        <taxon>Mycoplasmoides</taxon>
    </lineage>
</organism>
<comment type="function">
    <text evidence="1">One of the essential components for the initiation of protein synthesis. Stabilizes the binding of IF-2 and IF-3 on the 30S subunit to which N-formylmethionyl-tRNA(fMet) subsequently binds. Helps modulate mRNA selection, yielding the 30S pre-initiation complex (PIC). Upon addition of the 50S ribosomal subunit IF-1, IF-2 and IF-3 are released leaving the mature 70S translation initiation complex.</text>
</comment>
<comment type="subunit">
    <text evidence="1">Component of the 30S ribosomal translation pre-initiation complex which assembles on the 30S ribosome in the order IF-2 and IF-3, IF-1 and N-formylmethionyl-tRNA(fMet); mRNA recruitment can occur at any time during PIC assembly.</text>
</comment>
<comment type="subcellular location">
    <subcellularLocation>
        <location evidence="1">Cytoplasm</location>
    </subcellularLocation>
</comment>
<comment type="similarity">
    <text evidence="1">Belongs to the IF-1 family.</text>
</comment>
<sequence>MKETNLSIKGVVKEIIKGDKFKVLLENNLLIEAHVSGKIRMHKIRILPGDSVEVEFSPYDLTKGRIIYRH</sequence>
<dbReference type="EMBL" id="L35043">
    <property type="protein sequence ID" value="AAF19043.1"/>
    <property type="molecule type" value="Genomic_DNA"/>
</dbReference>
<dbReference type="EMBL" id="AE015450">
    <property type="protein sequence ID" value="AAP56982.1"/>
    <property type="molecule type" value="Genomic_DNA"/>
</dbReference>
<dbReference type="RefSeq" id="WP_011113891.1">
    <property type="nucleotide sequence ID" value="NC_004829.2"/>
</dbReference>
<dbReference type="SMR" id="Q9R6P8"/>
<dbReference type="GeneID" id="93510468"/>
<dbReference type="KEGG" id="mga:MGA_0449"/>
<dbReference type="HOGENOM" id="CLU_151267_1_0_14"/>
<dbReference type="OrthoDB" id="9803250at2"/>
<dbReference type="Proteomes" id="UP000001418">
    <property type="component" value="Chromosome"/>
</dbReference>
<dbReference type="GO" id="GO:0005829">
    <property type="term" value="C:cytosol"/>
    <property type="evidence" value="ECO:0007669"/>
    <property type="project" value="TreeGrafter"/>
</dbReference>
<dbReference type="GO" id="GO:0043022">
    <property type="term" value="F:ribosome binding"/>
    <property type="evidence" value="ECO:0007669"/>
    <property type="project" value="UniProtKB-UniRule"/>
</dbReference>
<dbReference type="GO" id="GO:0019843">
    <property type="term" value="F:rRNA binding"/>
    <property type="evidence" value="ECO:0007669"/>
    <property type="project" value="UniProtKB-UniRule"/>
</dbReference>
<dbReference type="GO" id="GO:0003743">
    <property type="term" value="F:translation initiation factor activity"/>
    <property type="evidence" value="ECO:0007669"/>
    <property type="project" value="UniProtKB-UniRule"/>
</dbReference>
<dbReference type="CDD" id="cd04451">
    <property type="entry name" value="S1_IF1"/>
    <property type="match status" value="1"/>
</dbReference>
<dbReference type="FunFam" id="2.40.50.140:FF:000002">
    <property type="entry name" value="Translation initiation factor IF-1"/>
    <property type="match status" value="1"/>
</dbReference>
<dbReference type="Gene3D" id="2.40.50.140">
    <property type="entry name" value="Nucleic acid-binding proteins"/>
    <property type="match status" value="1"/>
</dbReference>
<dbReference type="HAMAP" id="MF_00075">
    <property type="entry name" value="IF_1"/>
    <property type="match status" value="1"/>
</dbReference>
<dbReference type="InterPro" id="IPR012340">
    <property type="entry name" value="NA-bd_OB-fold"/>
</dbReference>
<dbReference type="InterPro" id="IPR006196">
    <property type="entry name" value="RNA-binding_domain_S1_IF1"/>
</dbReference>
<dbReference type="InterPro" id="IPR004368">
    <property type="entry name" value="TIF_IF1"/>
</dbReference>
<dbReference type="NCBIfam" id="TIGR00008">
    <property type="entry name" value="infA"/>
    <property type="match status" value="1"/>
</dbReference>
<dbReference type="PANTHER" id="PTHR33370">
    <property type="entry name" value="TRANSLATION INITIATION FACTOR IF-1, CHLOROPLASTIC"/>
    <property type="match status" value="1"/>
</dbReference>
<dbReference type="PANTHER" id="PTHR33370:SF1">
    <property type="entry name" value="TRANSLATION INITIATION FACTOR IF-1, CHLOROPLASTIC"/>
    <property type="match status" value="1"/>
</dbReference>
<dbReference type="Pfam" id="PF01176">
    <property type="entry name" value="eIF-1a"/>
    <property type="match status" value="1"/>
</dbReference>
<dbReference type="SUPFAM" id="SSF50249">
    <property type="entry name" value="Nucleic acid-binding proteins"/>
    <property type="match status" value="1"/>
</dbReference>
<dbReference type="PROSITE" id="PS50832">
    <property type="entry name" value="S1_IF1_TYPE"/>
    <property type="match status" value="1"/>
</dbReference>
<evidence type="ECO:0000255" key="1">
    <source>
        <dbReference type="HAMAP-Rule" id="MF_00075"/>
    </source>
</evidence>
<keyword id="KW-0963">Cytoplasm</keyword>
<keyword id="KW-0396">Initiation factor</keyword>
<keyword id="KW-0648">Protein biosynthesis</keyword>
<keyword id="KW-1185">Reference proteome</keyword>
<keyword id="KW-0694">RNA-binding</keyword>
<keyword id="KW-0699">rRNA-binding</keyword>
<proteinExistence type="inferred from homology"/>